<sequence>MVKGEKGPKGKKITLKVARNCIKITFDGKKRLDLSKMGITTFPKCILRLSDMDELDLSRNLIRKIPDSISKFQNLRWLDLHSNYIDKLPESIGQMTSLLYLNVSNNRLTSNGLPVELKQLKNIRAVNLGLNHLDSVPTTLGALKELHEVGLHDNLLNNIPVSISKLPKLKKLNIKRNPFPKPGESEIFIDSIRRLENLYVVEEKDLCAACLRKCQNARDNLNRIKNMATTTPRKTIFPNLISPNSMAKDSWEDWRIRLTSS</sequence>
<evidence type="ECO:0000250" key="1"/>
<evidence type="ECO:0000303" key="2">
    <source>
    </source>
</evidence>
<evidence type="ECO:0000305" key="3"/>
<accession>Q8N456</accession>
<accession>Q6UY02</accession>
<protein>
    <recommendedName>
        <fullName>Leucine-rich repeat-containing protein 18</fullName>
    </recommendedName>
</protein>
<gene>
    <name type="primary">LRRC18</name>
    <name type="ORF">UNQ9338/PRO34010</name>
</gene>
<reference key="1">
    <citation type="journal article" date="2003" name="Genome Res.">
        <title>The secreted protein discovery initiative (SPDI), a large-scale effort to identify novel human secreted and transmembrane proteins: a bioinformatics assessment.</title>
        <authorList>
            <person name="Clark H.F."/>
            <person name="Gurney A.L."/>
            <person name="Abaya E."/>
            <person name="Baker K."/>
            <person name="Baldwin D.T."/>
            <person name="Brush J."/>
            <person name="Chen J."/>
            <person name="Chow B."/>
            <person name="Chui C."/>
            <person name="Crowley C."/>
            <person name="Currell B."/>
            <person name="Deuel B."/>
            <person name="Dowd P."/>
            <person name="Eaton D."/>
            <person name="Foster J.S."/>
            <person name="Grimaldi C."/>
            <person name="Gu Q."/>
            <person name="Hass P.E."/>
            <person name="Heldens S."/>
            <person name="Huang A."/>
            <person name="Kim H.S."/>
            <person name="Klimowski L."/>
            <person name="Jin Y."/>
            <person name="Johnson S."/>
            <person name="Lee J."/>
            <person name="Lewis L."/>
            <person name="Liao D."/>
            <person name="Mark M.R."/>
            <person name="Robbie E."/>
            <person name="Sanchez C."/>
            <person name="Schoenfeld J."/>
            <person name="Seshagiri S."/>
            <person name="Simmons L."/>
            <person name="Singh J."/>
            <person name="Smith V."/>
            <person name="Stinson J."/>
            <person name="Vagts A."/>
            <person name="Vandlen R.L."/>
            <person name="Watanabe C."/>
            <person name="Wieand D."/>
            <person name="Woods K."/>
            <person name="Xie M.-H."/>
            <person name="Yansura D.G."/>
            <person name="Yi S."/>
            <person name="Yu G."/>
            <person name="Yuan J."/>
            <person name="Zhang M."/>
            <person name="Zhang Z."/>
            <person name="Goddard A.D."/>
            <person name="Wood W.I."/>
            <person name="Godowski P.J."/>
            <person name="Gray A.M."/>
        </authorList>
    </citation>
    <scope>NUCLEOTIDE SEQUENCE [LARGE SCALE MRNA] (ISOFORM 2)</scope>
</reference>
<reference key="2">
    <citation type="journal article" date="2004" name="Genome Res.">
        <title>The status, quality, and expansion of the NIH full-length cDNA project: the Mammalian Gene Collection (MGC).</title>
        <authorList>
            <consortium name="The MGC Project Team"/>
        </authorList>
    </citation>
    <scope>NUCLEOTIDE SEQUENCE [LARGE SCALE MRNA] (ISOFORM 1)</scope>
    <source>
        <tissue>Lung</tissue>
    </source>
</reference>
<name>LRC18_HUMAN</name>
<proteinExistence type="evidence at protein level"/>
<feature type="chain" id="PRO_0000084472" description="Leucine-rich repeat-containing protein 18">
    <location>
        <begin position="1"/>
        <end position="261"/>
    </location>
</feature>
<feature type="repeat" description="LRR 1">
    <location>
        <begin position="28"/>
        <end position="49"/>
    </location>
</feature>
<feature type="repeat" description="LRR 2">
    <location>
        <begin position="51"/>
        <end position="72"/>
    </location>
</feature>
<feature type="repeat" description="LRR 3">
    <location>
        <begin position="74"/>
        <end position="95"/>
    </location>
</feature>
<feature type="repeat" description="LRR 4">
    <location>
        <begin position="97"/>
        <end position="118"/>
    </location>
</feature>
<feature type="repeat" description="LRR 5">
    <location>
        <begin position="122"/>
        <end position="144"/>
    </location>
</feature>
<feature type="repeat" description="LRR 6">
    <location>
        <begin position="145"/>
        <end position="167"/>
    </location>
</feature>
<feature type="repeat" description="LRR 7">
    <location>
        <begin position="168"/>
        <end position="189"/>
    </location>
</feature>
<feature type="splice variant" id="VSP_015740" description="In isoform 2." evidence="2">
    <location>
        <begin position="256"/>
        <end position="261"/>
    </location>
</feature>
<feature type="sequence variant" id="VAR_028161" description="In dbSNP:rs7094610.">
    <original>G</original>
    <variation>V</variation>
    <location>
        <position position="7"/>
    </location>
</feature>
<feature type="sequence variant" id="VAR_028162" description="In dbSNP:rs17772611.">
    <original>R</original>
    <variation>H</variation>
    <location>
        <position position="31"/>
    </location>
</feature>
<feature type="sequence conflict" description="In Ref. 2; AAH36722." evidence="3" ref="2">
    <original>P</original>
    <variation>S</variation>
    <location>
        <position position="137"/>
    </location>
</feature>
<keyword id="KW-0025">Alternative splicing</keyword>
<keyword id="KW-0963">Cytoplasm</keyword>
<keyword id="KW-0433">Leucine-rich repeat</keyword>
<keyword id="KW-1267">Proteomics identification</keyword>
<keyword id="KW-1185">Reference proteome</keyword>
<keyword id="KW-0677">Repeat</keyword>
<dbReference type="EMBL" id="AY358137">
    <property type="protein sequence ID" value="AAQ88504.1"/>
    <property type="molecule type" value="mRNA"/>
</dbReference>
<dbReference type="EMBL" id="BC036722">
    <property type="protein sequence ID" value="AAH36722.1"/>
    <property type="molecule type" value="mRNA"/>
</dbReference>
<dbReference type="CCDS" id="CCDS31197.1">
    <molecule id="Q8N456-1"/>
</dbReference>
<dbReference type="RefSeq" id="NP_001006940.3">
    <molecule id="Q8N456-1"/>
    <property type="nucleotide sequence ID" value="NM_001006939.4"/>
</dbReference>
<dbReference type="RefSeq" id="NP_001365031.1">
    <molecule id="Q8N456-1"/>
    <property type="nucleotide sequence ID" value="NM_001378102.1"/>
</dbReference>
<dbReference type="RefSeq" id="XP_006717930.1">
    <property type="nucleotide sequence ID" value="XM_006717867.2"/>
</dbReference>
<dbReference type="RefSeq" id="XP_011538124.1">
    <molecule id="Q8N456-1"/>
    <property type="nucleotide sequence ID" value="XM_011539822.2"/>
</dbReference>
<dbReference type="RefSeq" id="XP_011538125.1">
    <molecule id="Q8N456-1"/>
    <property type="nucleotide sequence ID" value="XM_011539823.2"/>
</dbReference>
<dbReference type="RefSeq" id="XP_011538128.1">
    <molecule id="Q8N456-1"/>
    <property type="nucleotide sequence ID" value="XM_011539826.4"/>
</dbReference>
<dbReference type="RefSeq" id="XP_011538130.1">
    <molecule id="Q8N456-1"/>
    <property type="nucleotide sequence ID" value="XM_011539828.3"/>
</dbReference>
<dbReference type="RefSeq" id="XP_011538131.1">
    <property type="nucleotide sequence ID" value="XM_011539829.2"/>
</dbReference>
<dbReference type="RefSeq" id="XP_016871765.1">
    <molecule id="Q8N456-1"/>
    <property type="nucleotide sequence ID" value="XM_017016276.2"/>
</dbReference>
<dbReference type="RefSeq" id="XP_016871766.1">
    <molecule id="Q8N456-1"/>
    <property type="nucleotide sequence ID" value="XM_017016277.3"/>
</dbReference>
<dbReference type="RefSeq" id="XP_054221926.1">
    <molecule id="Q8N456-1"/>
    <property type="nucleotide sequence ID" value="XM_054365951.1"/>
</dbReference>
<dbReference type="RefSeq" id="XP_054221927.1">
    <molecule id="Q8N456-1"/>
    <property type="nucleotide sequence ID" value="XM_054365952.1"/>
</dbReference>
<dbReference type="RefSeq" id="XP_054221928.1">
    <molecule id="Q8N456-1"/>
    <property type="nucleotide sequence ID" value="XM_054365953.1"/>
</dbReference>
<dbReference type="RefSeq" id="XP_054221929.1">
    <molecule id="Q8N456-1"/>
    <property type="nucleotide sequence ID" value="XM_054365954.1"/>
</dbReference>
<dbReference type="RefSeq" id="XP_054221930.1">
    <molecule id="Q8N456-1"/>
    <property type="nucleotide sequence ID" value="XM_054365955.1"/>
</dbReference>
<dbReference type="RefSeq" id="XP_054221931.1">
    <molecule id="Q8N456-1"/>
    <property type="nucleotide sequence ID" value="XM_054365956.1"/>
</dbReference>
<dbReference type="RefSeq" id="XP_054221932.1">
    <molecule id="Q8N456-1"/>
    <property type="nucleotide sequence ID" value="XM_054365957.1"/>
</dbReference>
<dbReference type="SMR" id="Q8N456"/>
<dbReference type="BioGRID" id="138880">
    <property type="interactions" value="7"/>
</dbReference>
<dbReference type="FunCoup" id="Q8N456">
    <property type="interactions" value="53"/>
</dbReference>
<dbReference type="IntAct" id="Q8N456">
    <property type="interactions" value="8"/>
</dbReference>
<dbReference type="STRING" id="9606.ENSP00000363275"/>
<dbReference type="iPTMnet" id="Q8N456"/>
<dbReference type="PhosphoSitePlus" id="Q8N456"/>
<dbReference type="BioMuta" id="LRRC18"/>
<dbReference type="DMDM" id="116242619"/>
<dbReference type="MassIVE" id="Q8N456"/>
<dbReference type="PaxDb" id="9606-ENSP00000298124"/>
<dbReference type="PeptideAtlas" id="Q8N456"/>
<dbReference type="ProteomicsDB" id="71886">
    <molecule id="Q8N456-1"/>
</dbReference>
<dbReference type="ProteomicsDB" id="71887">
    <molecule id="Q8N456-2"/>
</dbReference>
<dbReference type="Antibodypedia" id="49932">
    <property type="antibodies" value="93 antibodies from 19 providers"/>
</dbReference>
<dbReference type="DNASU" id="474354"/>
<dbReference type="Ensembl" id="ENST00000374160.8">
    <molecule id="Q8N456-1"/>
    <property type="protein sequence ID" value="ENSP00000363275.3"/>
    <property type="gene ID" value="ENSG00000165383.12"/>
</dbReference>
<dbReference type="GeneID" id="474354"/>
<dbReference type="KEGG" id="hsa:474354"/>
<dbReference type="MANE-Select" id="ENST00000374160.8">
    <property type="protein sequence ID" value="ENSP00000363275.3"/>
    <property type="RefSeq nucleotide sequence ID" value="NM_001378102.1"/>
    <property type="RefSeq protein sequence ID" value="NP_001365031.1"/>
</dbReference>
<dbReference type="UCSC" id="uc001jhd.4">
    <molecule id="Q8N456-1"/>
    <property type="organism name" value="human"/>
</dbReference>
<dbReference type="AGR" id="HGNC:23199"/>
<dbReference type="CTD" id="474354"/>
<dbReference type="DisGeNET" id="474354"/>
<dbReference type="GeneCards" id="LRRC18"/>
<dbReference type="HGNC" id="HGNC:23199">
    <property type="gene designation" value="LRRC18"/>
</dbReference>
<dbReference type="HPA" id="ENSG00000165383">
    <property type="expression patterns" value="Group enriched (choroid plexus, fallopian tube, testis)"/>
</dbReference>
<dbReference type="MIM" id="619002">
    <property type="type" value="gene"/>
</dbReference>
<dbReference type="neXtProt" id="NX_Q8N456"/>
<dbReference type="OpenTargets" id="ENSG00000165383"/>
<dbReference type="PharmGKB" id="PA134898691"/>
<dbReference type="VEuPathDB" id="HostDB:ENSG00000165383"/>
<dbReference type="eggNOG" id="KOG0619">
    <property type="taxonomic scope" value="Eukaryota"/>
</dbReference>
<dbReference type="GeneTree" id="ENSGT00940000156026"/>
<dbReference type="HOGENOM" id="CLU_000288_18_15_1"/>
<dbReference type="InParanoid" id="Q8N456"/>
<dbReference type="OMA" id="DSQEDWR"/>
<dbReference type="OrthoDB" id="676979at2759"/>
<dbReference type="PAN-GO" id="Q8N456">
    <property type="GO annotations" value="0 GO annotations based on evolutionary models"/>
</dbReference>
<dbReference type="PhylomeDB" id="Q8N456"/>
<dbReference type="TreeFam" id="TF331129"/>
<dbReference type="PathwayCommons" id="Q8N456"/>
<dbReference type="SignaLink" id="Q8N456"/>
<dbReference type="BioGRID-ORCS" id="474354">
    <property type="hits" value="5 hits in 1132 CRISPR screens"/>
</dbReference>
<dbReference type="GenomeRNAi" id="474354"/>
<dbReference type="Pharos" id="Q8N456">
    <property type="development level" value="Tdark"/>
</dbReference>
<dbReference type="PRO" id="PR:Q8N456"/>
<dbReference type="Proteomes" id="UP000005640">
    <property type="component" value="Chromosome 10"/>
</dbReference>
<dbReference type="RNAct" id="Q8N456">
    <property type="molecule type" value="protein"/>
</dbReference>
<dbReference type="Bgee" id="ENSG00000165383">
    <property type="expression patterns" value="Expressed in bronchial epithelial cell and 74 other cell types or tissues"/>
</dbReference>
<dbReference type="GO" id="GO:0005737">
    <property type="term" value="C:cytoplasm"/>
    <property type="evidence" value="ECO:0007669"/>
    <property type="project" value="UniProtKB-SubCell"/>
</dbReference>
<dbReference type="GO" id="GO:0035556">
    <property type="term" value="P:intracellular signal transduction"/>
    <property type="evidence" value="ECO:0000318"/>
    <property type="project" value="GO_Central"/>
</dbReference>
<dbReference type="FunFam" id="3.80.10.10:FF:000246">
    <property type="entry name" value="Leucine rich repeat containing 18"/>
    <property type="match status" value="1"/>
</dbReference>
<dbReference type="Gene3D" id="3.80.10.10">
    <property type="entry name" value="Ribonuclease Inhibitor"/>
    <property type="match status" value="1"/>
</dbReference>
<dbReference type="InterPro" id="IPR001611">
    <property type="entry name" value="Leu-rich_rpt"/>
</dbReference>
<dbReference type="InterPro" id="IPR003591">
    <property type="entry name" value="Leu-rich_rpt_typical-subtyp"/>
</dbReference>
<dbReference type="InterPro" id="IPR032675">
    <property type="entry name" value="LRR_dom_sf"/>
</dbReference>
<dbReference type="InterPro" id="IPR050216">
    <property type="entry name" value="LRR_domain-containing"/>
</dbReference>
<dbReference type="InterPro" id="IPR055414">
    <property type="entry name" value="LRR_R13L4/SHOC2-like"/>
</dbReference>
<dbReference type="PANTHER" id="PTHR48051">
    <property type="match status" value="1"/>
</dbReference>
<dbReference type="PANTHER" id="PTHR48051:SF42">
    <property type="entry name" value="LEUCINE-RICH REPEAT-CONTAINING PROTEIN 18-LIKE"/>
    <property type="match status" value="1"/>
</dbReference>
<dbReference type="Pfam" id="PF23598">
    <property type="entry name" value="LRR_14"/>
    <property type="match status" value="1"/>
</dbReference>
<dbReference type="SMART" id="SM00369">
    <property type="entry name" value="LRR_TYP"/>
    <property type="match status" value="4"/>
</dbReference>
<dbReference type="SUPFAM" id="SSF52058">
    <property type="entry name" value="L domain-like"/>
    <property type="match status" value="1"/>
</dbReference>
<dbReference type="PROSITE" id="PS51450">
    <property type="entry name" value="LRR"/>
    <property type="match status" value="5"/>
</dbReference>
<comment type="function">
    <text evidence="1">May be involved in the regulation of spermatogenesis and sperm maturation.</text>
</comment>
<comment type="interaction">
    <interactant intactId="EBI-751373">
        <id>Q8N456</id>
    </interactant>
    <interactant intactId="EBI-725515">
        <id>O43559</id>
        <label>FRS3</label>
    </interactant>
    <organismsDiffer>false</organismsDiffer>
    <experiments>3</experiments>
</comment>
<comment type="interaction">
    <interactant intactId="EBI-751373">
        <id>Q8N456</id>
    </interactant>
    <interactant intactId="EBI-16439278">
        <id>Q6FHY5</id>
        <label>MEOX2</label>
    </interactant>
    <organismsDiffer>false</organismsDiffer>
    <experiments>3</experiments>
</comment>
<comment type="interaction">
    <interactant intactId="EBI-751373">
        <id>Q8N456</id>
    </interactant>
    <interactant intactId="EBI-744471">
        <id>O43167</id>
        <label>ZBTB24</label>
    </interactant>
    <organismsDiffer>false</organismsDiffer>
    <experiments>3</experiments>
</comment>
<comment type="subcellular location">
    <subcellularLocation>
        <location evidence="1">Cytoplasm</location>
    </subcellularLocation>
</comment>
<comment type="alternative products">
    <event type="alternative splicing"/>
    <isoform>
        <id>Q8N456-1</id>
        <name>1</name>
        <sequence type="displayed"/>
    </isoform>
    <isoform>
        <id>Q8N456-2</id>
        <name>2</name>
        <sequence type="described" ref="VSP_015740"/>
    </isoform>
</comment>
<organism>
    <name type="scientific">Homo sapiens</name>
    <name type="common">Human</name>
    <dbReference type="NCBI Taxonomy" id="9606"/>
    <lineage>
        <taxon>Eukaryota</taxon>
        <taxon>Metazoa</taxon>
        <taxon>Chordata</taxon>
        <taxon>Craniata</taxon>
        <taxon>Vertebrata</taxon>
        <taxon>Euteleostomi</taxon>
        <taxon>Mammalia</taxon>
        <taxon>Eutheria</taxon>
        <taxon>Euarchontoglires</taxon>
        <taxon>Primates</taxon>
        <taxon>Haplorrhini</taxon>
        <taxon>Catarrhini</taxon>
        <taxon>Hominidae</taxon>
        <taxon>Homo</taxon>
    </lineage>
</organism>